<name>VME1_MERS1</name>
<keyword id="KW-0325">Glycoprotein</keyword>
<keyword id="KW-1040">Host Golgi apparatus</keyword>
<keyword id="KW-1043">Host membrane</keyword>
<keyword id="KW-0945">Host-virus interaction</keyword>
<keyword id="KW-0472">Membrane</keyword>
<keyword id="KW-1185">Reference proteome</keyword>
<keyword id="KW-0812">Transmembrane</keyword>
<keyword id="KW-1133">Transmembrane helix</keyword>
<keyword id="KW-0261">Viral envelope protein</keyword>
<keyword id="KW-0899">Viral immunoevasion</keyword>
<keyword id="KW-0468">Viral matrix protein</keyword>
<keyword id="KW-0946">Virion</keyword>
<gene>
    <name evidence="1" type="primary">M</name>
    <name type="ORF">5</name>
</gene>
<evidence type="ECO:0000255" key="1">
    <source>
        <dbReference type="HAMAP-Rule" id="MF_04202"/>
    </source>
</evidence>
<evidence type="ECO:0000255" key="2">
    <source>
        <dbReference type="PROSITE-ProRule" id="PRU01275"/>
    </source>
</evidence>
<evidence type="ECO:0000269" key="3">
    <source>
    </source>
</evidence>
<comment type="function">
    <text evidence="1 2">Component of the viral envelope that plays a central role in virus morphogenesis and assembly via its interactions with other viral proteins.</text>
</comment>
<comment type="subunit">
    <text evidence="1 2 3">Homomultimer. Interacts with envelope E protein in the budding compartment of the host cell, which is located between endoplasmic reticulum and the Golgi complex. Forms a complex with HE and S proteins. Interacts with nucleocapsid N protein. This interaction probably participates in RNA packaging into the virus.</text>
</comment>
<comment type="subcellular location">
    <subcellularLocation>
        <location evidence="1">Virion membrane</location>
        <topology evidence="1">Multi-pass membrane protein</topology>
    </subcellularLocation>
    <subcellularLocation>
        <location evidence="1 3">Host Golgi apparatus membrane</location>
        <topology evidence="1">Multi-pass membrane protein</topology>
    </subcellularLocation>
    <text evidence="1">Largely embedded in the lipid bilayer.</text>
</comment>
<comment type="similarity">
    <text evidence="1">Belongs to the betacoronaviruses M protein family.</text>
</comment>
<dbReference type="EMBL" id="KC164505">
    <property type="protein sequence ID" value="AFY13313.1"/>
    <property type="molecule type" value="Genomic_RNA"/>
</dbReference>
<dbReference type="RefSeq" id="YP_007188585.1">
    <property type="nucleotide sequence ID" value="NC_038294.1"/>
</dbReference>
<dbReference type="SMR" id="K9N7A1"/>
<dbReference type="BioGRID" id="4383876">
    <property type="interactions" value="21"/>
</dbReference>
<dbReference type="IntAct" id="K9N7A1">
    <property type="interactions" value="18"/>
</dbReference>
<dbReference type="GeneID" id="37616438"/>
<dbReference type="Proteomes" id="UP000139997">
    <property type="component" value="Genome"/>
</dbReference>
<dbReference type="GO" id="GO:0044177">
    <property type="term" value="C:host cell Golgi apparatus"/>
    <property type="evidence" value="ECO:0000314"/>
    <property type="project" value="UniProtKB"/>
</dbReference>
<dbReference type="GO" id="GO:0044178">
    <property type="term" value="C:host cell Golgi membrane"/>
    <property type="evidence" value="ECO:0007669"/>
    <property type="project" value="UniProtKB-SubCell"/>
</dbReference>
<dbReference type="GO" id="GO:0016020">
    <property type="term" value="C:membrane"/>
    <property type="evidence" value="ECO:0007669"/>
    <property type="project" value="UniProtKB-UniRule"/>
</dbReference>
<dbReference type="GO" id="GO:0019031">
    <property type="term" value="C:viral envelope"/>
    <property type="evidence" value="ECO:0007669"/>
    <property type="project" value="UniProtKB-UniRule"/>
</dbReference>
<dbReference type="GO" id="GO:0055036">
    <property type="term" value="C:virion membrane"/>
    <property type="evidence" value="ECO:0007669"/>
    <property type="project" value="UniProtKB-SubCell"/>
</dbReference>
<dbReference type="GO" id="GO:0039660">
    <property type="term" value="F:structural constituent of virion"/>
    <property type="evidence" value="ECO:0007669"/>
    <property type="project" value="UniProtKB-UniRule"/>
</dbReference>
<dbReference type="GO" id="GO:0039502">
    <property type="term" value="P:symbiont-mediated suppression of host type I interferon-mediated signaling pathway"/>
    <property type="evidence" value="ECO:0000314"/>
    <property type="project" value="UniProtKB"/>
</dbReference>
<dbReference type="CDD" id="cd21567">
    <property type="entry name" value="MERS-like-CoV_M"/>
    <property type="match status" value="1"/>
</dbReference>
<dbReference type="HAMAP" id="MF_04202">
    <property type="entry name" value="BETA_CORONA_M"/>
    <property type="match status" value="1"/>
</dbReference>
<dbReference type="InterPro" id="IPR002574">
    <property type="entry name" value="M_CoV"/>
</dbReference>
<dbReference type="InterPro" id="IPR044363">
    <property type="entry name" value="M_MERS-like-CoV"/>
</dbReference>
<dbReference type="Pfam" id="PF01635">
    <property type="entry name" value="CoV_M"/>
    <property type="match status" value="1"/>
</dbReference>
<dbReference type="PROSITE" id="PS51927">
    <property type="entry name" value="COV_M"/>
    <property type="match status" value="1"/>
</dbReference>
<proteinExistence type="inferred from homology"/>
<sequence length="219" mass="24537">MSNMTQLTEAQIIAIIKDWNFAWSLIFLLITIVLQYGYPSRSMTVYVFKMFVLWLLWPSSMALSIFSAVYPIDLASQIISGIVAAVSAMMWISYFVQSIRLFMRTGSWWSFNPETNCLLNVPFGGTTVVRPLVEDSTSVTAVVTNGHLKMAGMHFGACDYDRLPNEVTVAKPNVLIALKMVKRQSYGTNSGVAIYHRYKAGNYRSPPITADIELALLRA</sequence>
<organism>
    <name type="scientific">Middle East respiratory syndrome-related coronavirus (isolate United Kingdom/H123990006/2012)</name>
    <name type="common">MERS-CoV</name>
    <name type="synonym">Betacoronavirus England 1</name>
    <dbReference type="NCBI Taxonomy" id="1263720"/>
    <lineage>
        <taxon>Viruses</taxon>
        <taxon>Riboviria</taxon>
        <taxon>Orthornavirae</taxon>
        <taxon>Pisuviricota</taxon>
        <taxon>Pisoniviricetes</taxon>
        <taxon>Nidovirales</taxon>
        <taxon>Cornidovirineae</taxon>
        <taxon>Coronaviridae</taxon>
        <taxon>Orthocoronavirinae</taxon>
        <taxon>Betacoronavirus</taxon>
        <taxon>Merbecovirus</taxon>
        <taxon>Middle East respiratory syndrome-related coronavirus</taxon>
    </lineage>
</organism>
<accession>K9N7A1</accession>
<feature type="chain" id="PRO_0000422469" description="Membrane protein">
    <location>
        <begin position="1"/>
        <end position="219"/>
    </location>
</feature>
<feature type="topological domain" description="Virion surface" evidence="1">
    <location>
        <begin position="1"/>
        <end position="18"/>
    </location>
</feature>
<feature type="transmembrane region" description="Helical" evidence="1">
    <location>
        <begin position="19"/>
        <end position="39"/>
    </location>
</feature>
<feature type="topological domain" description="Intravirion" evidence="1">
    <location>
        <begin position="40"/>
        <end position="49"/>
    </location>
</feature>
<feature type="transmembrane region" description="Helical" evidence="1">
    <location>
        <begin position="50"/>
        <end position="70"/>
    </location>
</feature>
<feature type="topological domain" description="Virion surface" evidence="1">
    <location>
        <begin position="71"/>
        <end position="78"/>
    </location>
</feature>
<feature type="transmembrane region" description="Helical" evidence="1">
    <location>
        <begin position="79"/>
        <end position="99"/>
    </location>
</feature>
<feature type="topological domain" description="Intravirion" evidence="1">
    <location>
        <begin position="100"/>
        <end position="219"/>
    </location>
</feature>
<protein>
    <recommendedName>
        <fullName evidence="1">Membrane protein</fullName>
        <shortName evidence="1">M protein</shortName>
    </recommendedName>
    <alternativeName>
        <fullName evidence="1">E1 glycoprotein</fullName>
    </alternativeName>
    <alternativeName>
        <fullName evidence="1">Matrix glycoprotein</fullName>
    </alternativeName>
    <alternativeName>
        <fullName evidence="1">Membrane glycoprotein</fullName>
    </alternativeName>
</protein>
<reference key="1">
    <citation type="journal article" date="2012" name="Eurosurveillance">
        <title>Severe respiratory illness caused by a novel coronavirus, in a patient transferred to the United Kingdom from the Middle East, September 2012.</title>
        <authorList>
            <person name="Bermingham A."/>
            <person name="Chand M.A."/>
            <person name="Brown C.S."/>
            <person name="Aarons E."/>
            <person name="Tong C."/>
            <person name="Langrish C."/>
            <person name="Hoschler K."/>
            <person name="Brown K."/>
            <person name="Galiano M."/>
            <person name="Myers R."/>
            <person name="Pebody R.G."/>
            <person name="Green H.K."/>
            <person name="Boddington N.L."/>
            <person name="Gopal R."/>
            <person name="Price N."/>
            <person name="Newsholme W."/>
            <person name="Drosten C."/>
            <person name="Fouchier R.A."/>
            <person name="Zambon M."/>
        </authorList>
    </citation>
    <scope>NUCLEOTIDE SEQUENCE [GENOMIC RNA]</scope>
</reference>
<reference key="2">
    <citation type="journal article" date="2013" name="Protein Cell">
        <title>The structural and accessory proteins M, ORF 4a, ORF 4b, and ORF 5 of Middle East respiratory syndrome coronavirus (MERS-CoV) are potent interferon antagonists.</title>
        <authorList>
            <person name="Yang Y."/>
            <person name="Zhang L."/>
            <person name="Geng H."/>
            <person name="Deng Y."/>
            <person name="Huang B."/>
            <person name="Guo Y."/>
            <person name="Zhao Z."/>
            <person name="Tan W."/>
        </authorList>
    </citation>
    <scope>FUNCTION</scope>
    <scope>SUBCELLULAR LOCATION</scope>
</reference>
<organismHost>
    <name type="scientific">Camelus dromedarius</name>
    <name type="common">Dromedary</name>
    <name type="synonym">Arabian camel</name>
    <dbReference type="NCBI Taxonomy" id="9838"/>
</organismHost>
<organismHost>
    <name type="scientific">Homo sapiens</name>
    <name type="common">Human</name>
    <dbReference type="NCBI Taxonomy" id="9606"/>
</organismHost>